<evidence type="ECO:0000255" key="1">
    <source>
        <dbReference type="HAMAP-Rule" id="MF_00270"/>
    </source>
</evidence>
<evidence type="ECO:0000256" key="2">
    <source>
        <dbReference type="SAM" id="MobiDB-lite"/>
    </source>
</evidence>
<evidence type="ECO:0000305" key="3"/>
<reference key="1">
    <citation type="journal article" date="2004" name="Proc. Natl. Acad. Sci. U.S.A.">
        <title>The louse-borne human pathogen Bartonella quintana is a genomic derivative of the zoonotic agent Bartonella henselae.</title>
        <authorList>
            <person name="Alsmark U.C.M."/>
            <person name="Frank A.C."/>
            <person name="Karlberg E.O."/>
            <person name="Legault B.-A."/>
            <person name="Ardell D.H."/>
            <person name="Canbaeck B."/>
            <person name="Eriksson A.-S."/>
            <person name="Naeslund A.K."/>
            <person name="Handley S.A."/>
            <person name="Huvet M."/>
            <person name="La Scola B."/>
            <person name="Holmberg M."/>
            <person name="Andersson S.G.E."/>
        </authorList>
    </citation>
    <scope>NUCLEOTIDE SEQUENCE [LARGE SCALE GENOMIC DNA]</scope>
    <source>
        <strain>ATCC 49882 / DSM 28221 / CCUG 30454 / Houston 1</strain>
    </source>
</reference>
<dbReference type="EMBL" id="BX897699">
    <property type="protein sequence ID" value="CAF27339.1"/>
    <property type="molecule type" value="Genomic_DNA"/>
</dbReference>
<dbReference type="RefSeq" id="WP_011180461.1">
    <property type="nucleotide sequence ID" value="NZ_LRIJ02000001.1"/>
</dbReference>
<dbReference type="SMR" id="Q6G447"/>
<dbReference type="PaxDb" id="283166-BH05310"/>
<dbReference type="EnsemblBacteria" id="CAF27339">
    <property type="protein sequence ID" value="CAF27339"/>
    <property type="gene ID" value="BH05310"/>
</dbReference>
<dbReference type="GeneID" id="92985187"/>
<dbReference type="KEGG" id="bhe:BH05310"/>
<dbReference type="eggNOG" id="COG0238">
    <property type="taxonomic scope" value="Bacteria"/>
</dbReference>
<dbReference type="OrthoDB" id="9812008at2"/>
<dbReference type="Proteomes" id="UP000000421">
    <property type="component" value="Chromosome"/>
</dbReference>
<dbReference type="GO" id="GO:0022627">
    <property type="term" value="C:cytosolic small ribosomal subunit"/>
    <property type="evidence" value="ECO:0007669"/>
    <property type="project" value="TreeGrafter"/>
</dbReference>
<dbReference type="GO" id="GO:0070181">
    <property type="term" value="F:small ribosomal subunit rRNA binding"/>
    <property type="evidence" value="ECO:0007669"/>
    <property type="project" value="TreeGrafter"/>
</dbReference>
<dbReference type="GO" id="GO:0003735">
    <property type="term" value="F:structural constituent of ribosome"/>
    <property type="evidence" value="ECO:0007669"/>
    <property type="project" value="InterPro"/>
</dbReference>
<dbReference type="GO" id="GO:0006412">
    <property type="term" value="P:translation"/>
    <property type="evidence" value="ECO:0007669"/>
    <property type="project" value="UniProtKB-UniRule"/>
</dbReference>
<dbReference type="Gene3D" id="4.10.640.10">
    <property type="entry name" value="Ribosomal protein S18"/>
    <property type="match status" value="1"/>
</dbReference>
<dbReference type="HAMAP" id="MF_00270">
    <property type="entry name" value="Ribosomal_bS18"/>
    <property type="match status" value="1"/>
</dbReference>
<dbReference type="InterPro" id="IPR001648">
    <property type="entry name" value="Ribosomal_bS18"/>
</dbReference>
<dbReference type="InterPro" id="IPR018275">
    <property type="entry name" value="Ribosomal_bS18_CS"/>
</dbReference>
<dbReference type="InterPro" id="IPR036870">
    <property type="entry name" value="Ribosomal_bS18_sf"/>
</dbReference>
<dbReference type="NCBIfam" id="TIGR00165">
    <property type="entry name" value="S18"/>
    <property type="match status" value="1"/>
</dbReference>
<dbReference type="PANTHER" id="PTHR13479">
    <property type="entry name" value="30S RIBOSOMAL PROTEIN S18"/>
    <property type="match status" value="1"/>
</dbReference>
<dbReference type="PANTHER" id="PTHR13479:SF40">
    <property type="entry name" value="SMALL RIBOSOMAL SUBUNIT PROTEIN BS18M"/>
    <property type="match status" value="1"/>
</dbReference>
<dbReference type="Pfam" id="PF01084">
    <property type="entry name" value="Ribosomal_S18"/>
    <property type="match status" value="1"/>
</dbReference>
<dbReference type="PRINTS" id="PR00974">
    <property type="entry name" value="RIBOSOMALS18"/>
</dbReference>
<dbReference type="SUPFAM" id="SSF46911">
    <property type="entry name" value="Ribosomal protein S18"/>
    <property type="match status" value="1"/>
</dbReference>
<dbReference type="PROSITE" id="PS00057">
    <property type="entry name" value="RIBOSOMAL_S18"/>
    <property type="match status" value="1"/>
</dbReference>
<accession>Q6G447</accession>
<protein>
    <recommendedName>
        <fullName evidence="1">Small ribosomal subunit protein bS18</fullName>
    </recommendedName>
    <alternativeName>
        <fullName evidence="3">30S ribosomal protein S18</fullName>
    </alternativeName>
</protein>
<organism>
    <name type="scientific">Bartonella henselae (strain ATCC 49882 / DSM 28221 / CCUG 30454 / Houston 1)</name>
    <name type="common">Rochalimaea henselae</name>
    <dbReference type="NCBI Taxonomy" id="283166"/>
    <lineage>
        <taxon>Bacteria</taxon>
        <taxon>Pseudomonadati</taxon>
        <taxon>Pseudomonadota</taxon>
        <taxon>Alphaproteobacteria</taxon>
        <taxon>Hyphomicrobiales</taxon>
        <taxon>Bartonellaceae</taxon>
        <taxon>Bartonella</taxon>
    </lineage>
</organism>
<name>RS18_BARHE</name>
<keyword id="KW-0687">Ribonucleoprotein</keyword>
<keyword id="KW-0689">Ribosomal protein</keyword>
<keyword id="KW-0694">RNA-binding</keyword>
<keyword id="KW-0699">rRNA-binding</keyword>
<proteinExistence type="inferred from homology"/>
<feature type="chain" id="PRO_0000111119" description="Small ribosomal subunit protein bS18">
    <location>
        <begin position="1"/>
        <end position="82"/>
    </location>
</feature>
<feature type="region of interest" description="Disordered" evidence="2">
    <location>
        <begin position="1"/>
        <end position="25"/>
    </location>
</feature>
<sequence>MTEMNQTAIRRPFHRRRKTCPFSGTNAPKIDYKDIKLLQRYISERGKIVPSRITAISQKKQRELANAIKRARFLGLLPYVIK</sequence>
<comment type="function">
    <text evidence="1">Binds as a heterodimer with protein bS6 to the central domain of the 16S rRNA, where it helps stabilize the platform of the 30S subunit.</text>
</comment>
<comment type="subunit">
    <text evidence="1">Part of the 30S ribosomal subunit. Forms a tight heterodimer with protein bS6.</text>
</comment>
<comment type="similarity">
    <text evidence="1">Belongs to the bacterial ribosomal protein bS18 family.</text>
</comment>
<gene>
    <name evidence="1" type="primary">rpsR</name>
    <name type="ordered locus">BH05310</name>
</gene>